<proteinExistence type="inferred from homology"/>
<dbReference type="EC" id="1.2.1.41" evidence="1"/>
<dbReference type="EMBL" id="AE008923">
    <property type="protein sequence ID" value="AAM37194.1"/>
    <property type="molecule type" value="Genomic_DNA"/>
</dbReference>
<dbReference type="RefSeq" id="WP_011051521.1">
    <property type="nucleotide sequence ID" value="NC_003919.1"/>
</dbReference>
<dbReference type="SMR" id="Q8PK35"/>
<dbReference type="KEGG" id="xac:XAC2342"/>
<dbReference type="eggNOG" id="COG0014">
    <property type="taxonomic scope" value="Bacteria"/>
</dbReference>
<dbReference type="HOGENOM" id="CLU_030231_0_0_6"/>
<dbReference type="UniPathway" id="UPA00098">
    <property type="reaction ID" value="UER00360"/>
</dbReference>
<dbReference type="Proteomes" id="UP000000576">
    <property type="component" value="Chromosome"/>
</dbReference>
<dbReference type="GO" id="GO:0005737">
    <property type="term" value="C:cytoplasm"/>
    <property type="evidence" value="ECO:0007669"/>
    <property type="project" value="UniProtKB-SubCell"/>
</dbReference>
<dbReference type="GO" id="GO:0004350">
    <property type="term" value="F:glutamate-5-semialdehyde dehydrogenase activity"/>
    <property type="evidence" value="ECO:0007669"/>
    <property type="project" value="UniProtKB-UniRule"/>
</dbReference>
<dbReference type="GO" id="GO:0050661">
    <property type="term" value="F:NADP binding"/>
    <property type="evidence" value="ECO:0007669"/>
    <property type="project" value="InterPro"/>
</dbReference>
<dbReference type="GO" id="GO:0055129">
    <property type="term" value="P:L-proline biosynthetic process"/>
    <property type="evidence" value="ECO:0007669"/>
    <property type="project" value="UniProtKB-UniRule"/>
</dbReference>
<dbReference type="CDD" id="cd07079">
    <property type="entry name" value="ALDH_F18-19_ProA-GPR"/>
    <property type="match status" value="1"/>
</dbReference>
<dbReference type="FunFam" id="3.40.309.10:FF:000006">
    <property type="entry name" value="Gamma-glutamyl phosphate reductase"/>
    <property type="match status" value="1"/>
</dbReference>
<dbReference type="Gene3D" id="3.40.605.10">
    <property type="entry name" value="Aldehyde Dehydrogenase, Chain A, domain 1"/>
    <property type="match status" value="1"/>
</dbReference>
<dbReference type="Gene3D" id="3.40.309.10">
    <property type="entry name" value="Aldehyde Dehydrogenase, Chain A, domain 2"/>
    <property type="match status" value="1"/>
</dbReference>
<dbReference type="HAMAP" id="MF_00412">
    <property type="entry name" value="ProA"/>
    <property type="match status" value="1"/>
</dbReference>
<dbReference type="InterPro" id="IPR016161">
    <property type="entry name" value="Ald_DH/histidinol_DH"/>
</dbReference>
<dbReference type="InterPro" id="IPR016163">
    <property type="entry name" value="Ald_DH_C"/>
</dbReference>
<dbReference type="InterPro" id="IPR016162">
    <property type="entry name" value="Ald_DH_N"/>
</dbReference>
<dbReference type="InterPro" id="IPR015590">
    <property type="entry name" value="Aldehyde_DH_dom"/>
</dbReference>
<dbReference type="InterPro" id="IPR020593">
    <property type="entry name" value="G-glutamylP_reductase_CS"/>
</dbReference>
<dbReference type="InterPro" id="IPR012134">
    <property type="entry name" value="Glu-5-SA_DH"/>
</dbReference>
<dbReference type="InterPro" id="IPR000965">
    <property type="entry name" value="GPR_dom"/>
</dbReference>
<dbReference type="NCBIfam" id="NF001221">
    <property type="entry name" value="PRK00197.1"/>
    <property type="match status" value="1"/>
</dbReference>
<dbReference type="NCBIfam" id="TIGR00407">
    <property type="entry name" value="proA"/>
    <property type="match status" value="1"/>
</dbReference>
<dbReference type="PANTHER" id="PTHR11063:SF8">
    <property type="entry name" value="DELTA-1-PYRROLINE-5-CARBOXYLATE SYNTHASE"/>
    <property type="match status" value="1"/>
</dbReference>
<dbReference type="PANTHER" id="PTHR11063">
    <property type="entry name" value="GLUTAMATE SEMIALDEHYDE DEHYDROGENASE"/>
    <property type="match status" value="1"/>
</dbReference>
<dbReference type="Pfam" id="PF00171">
    <property type="entry name" value="Aldedh"/>
    <property type="match status" value="1"/>
</dbReference>
<dbReference type="PIRSF" id="PIRSF000151">
    <property type="entry name" value="GPR"/>
    <property type="match status" value="1"/>
</dbReference>
<dbReference type="SUPFAM" id="SSF53720">
    <property type="entry name" value="ALDH-like"/>
    <property type="match status" value="1"/>
</dbReference>
<dbReference type="PROSITE" id="PS01223">
    <property type="entry name" value="PROA"/>
    <property type="match status" value="1"/>
</dbReference>
<protein>
    <recommendedName>
        <fullName evidence="1">Gamma-glutamyl phosphate reductase</fullName>
        <shortName evidence="1">GPR</shortName>
        <ecNumber evidence="1">1.2.1.41</ecNumber>
    </recommendedName>
    <alternativeName>
        <fullName evidence="1">Glutamate-5-semialdehyde dehydrogenase</fullName>
    </alternativeName>
    <alternativeName>
        <fullName evidence="1">Glutamyl-gamma-semialdehyde dehydrogenase</fullName>
        <shortName evidence="1">GSA dehydrogenase</shortName>
    </alternativeName>
</protein>
<keyword id="KW-0028">Amino-acid biosynthesis</keyword>
<keyword id="KW-0963">Cytoplasm</keyword>
<keyword id="KW-0521">NADP</keyword>
<keyword id="KW-0560">Oxidoreductase</keyword>
<keyword id="KW-0641">Proline biosynthesis</keyword>
<sequence>MTIKTLALQCRDAAQVVSQLSAQAKHALLEAMAAALETDAAAILAANARDLEAARAKGTGSAMLDRLALDDKRMAGIAAALREVAQLPDPVGQITRQEVRPNGIRVQKMRVPLGVIAMIYEARPNVTADAAALCIKAGNGVILRGGSEAIHSNTAIARALQGALREANVPEAALTLVEDLRRETMLELLQLNDIVDLAIPRGGEGLIRFVAEHARVPVIKHYKGVCHLFVDASADLALALRLLIDGKATRPAACNSLETLLVHADIAERFLPLAAQALRERKVELRGDAATRAVLPEIAPASDDDYAAEFLDLILAIRVVPDLDTALAHIRQHGSDHTEVIATQDADNAERFVQALRSAVVMVNASSRFSDGGELGLGAEIGISTTRLHSYGPMGLEALTVERFVVRGEGQVRH</sequence>
<organism>
    <name type="scientific">Xanthomonas axonopodis pv. citri (strain 306)</name>
    <dbReference type="NCBI Taxonomy" id="190486"/>
    <lineage>
        <taxon>Bacteria</taxon>
        <taxon>Pseudomonadati</taxon>
        <taxon>Pseudomonadota</taxon>
        <taxon>Gammaproteobacteria</taxon>
        <taxon>Lysobacterales</taxon>
        <taxon>Lysobacteraceae</taxon>
        <taxon>Xanthomonas</taxon>
    </lineage>
</organism>
<evidence type="ECO:0000255" key="1">
    <source>
        <dbReference type="HAMAP-Rule" id="MF_00412"/>
    </source>
</evidence>
<name>PROA_XANAC</name>
<accession>Q8PK35</accession>
<feature type="chain" id="PRO_0000189813" description="Gamma-glutamyl phosphate reductase">
    <location>
        <begin position="1"/>
        <end position="414"/>
    </location>
</feature>
<comment type="function">
    <text evidence="1">Catalyzes the NADPH-dependent reduction of L-glutamate 5-phosphate into L-glutamate 5-semialdehyde and phosphate. The product spontaneously undergoes cyclization to form 1-pyrroline-5-carboxylate.</text>
</comment>
<comment type="catalytic activity">
    <reaction evidence="1">
        <text>L-glutamate 5-semialdehyde + phosphate + NADP(+) = L-glutamyl 5-phosphate + NADPH + H(+)</text>
        <dbReference type="Rhea" id="RHEA:19541"/>
        <dbReference type="ChEBI" id="CHEBI:15378"/>
        <dbReference type="ChEBI" id="CHEBI:43474"/>
        <dbReference type="ChEBI" id="CHEBI:57783"/>
        <dbReference type="ChEBI" id="CHEBI:58066"/>
        <dbReference type="ChEBI" id="CHEBI:58274"/>
        <dbReference type="ChEBI" id="CHEBI:58349"/>
        <dbReference type="EC" id="1.2.1.41"/>
    </reaction>
</comment>
<comment type="pathway">
    <text evidence="1">Amino-acid biosynthesis; L-proline biosynthesis; L-glutamate 5-semialdehyde from L-glutamate: step 2/2.</text>
</comment>
<comment type="subcellular location">
    <subcellularLocation>
        <location evidence="1">Cytoplasm</location>
    </subcellularLocation>
</comment>
<comment type="similarity">
    <text evidence="1">Belongs to the gamma-glutamyl phosphate reductase family.</text>
</comment>
<reference key="1">
    <citation type="journal article" date="2002" name="Nature">
        <title>Comparison of the genomes of two Xanthomonas pathogens with differing host specificities.</title>
        <authorList>
            <person name="da Silva A.C.R."/>
            <person name="Ferro J.A."/>
            <person name="Reinach F.C."/>
            <person name="Farah C.S."/>
            <person name="Furlan L.R."/>
            <person name="Quaggio R.B."/>
            <person name="Monteiro-Vitorello C.B."/>
            <person name="Van Sluys M.A."/>
            <person name="Almeida N.F. Jr."/>
            <person name="Alves L.M.C."/>
            <person name="do Amaral A.M."/>
            <person name="Bertolini M.C."/>
            <person name="Camargo L.E.A."/>
            <person name="Camarotte G."/>
            <person name="Cannavan F."/>
            <person name="Cardozo J."/>
            <person name="Chambergo F."/>
            <person name="Ciapina L.P."/>
            <person name="Cicarelli R.M.B."/>
            <person name="Coutinho L.L."/>
            <person name="Cursino-Santos J.R."/>
            <person name="El-Dorry H."/>
            <person name="Faria J.B."/>
            <person name="Ferreira A.J.S."/>
            <person name="Ferreira R.C.C."/>
            <person name="Ferro M.I.T."/>
            <person name="Formighieri E.F."/>
            <person name="Franco M.C."/>
            <person name="Greggio C.C."/>
            <person name="Gruber A."/>
            <person name="Katsuyama A.M."/>
            <person name="Kishi L.T."/>
            <person name="Leite R.P."/>
            <person name="Lemos E.G.M."/>
            <person name="Lemos M.V.F."/>
            <person name="Locali E.C."/>
            <person name="Machado M.A."/>
            <person name="Madeira A.M.B.N."/>
            <person name="Martinez-Rossi N.M."/>
            <person name="Martins E.C."/>
            <person name="Meidanis J."/>
            <person name="Menck C.F.M."/>
            <person name="Miyaki C.Y."/>
            <person name="Moon D.H."/>
            <person name="Moreira L.M."/>
            <person name="Novo M.T.M."/>
            <person name="Okura V.K."/>
            <person name="Oliveira M.C."/>
            <person name="Oliveira V.R."/>
            <person name="Pereira H.A."/>
            <person name="Rossi A."/>
            <person name="Sena J.A.D."/>
            <person name="Silva C."/>
            <person name="de Souza R.F."/>
            <person name="Spinola L.A.F."/>
            <person name="Takita M.A."/>
            <person name="Tamura R.E."/>
            <person name="Teixeira E.C."/>
            <person name="Tezza R.I.D."/>
            <person name="Trindade dos Santos M."/>
            <person name="Truffi D."/>
            <person name="Tsai S.M."/>
            <person name="White F.F."/>
            <person name="Setubal J.C."/>
            <person name="Kitajima J.P."/>
        </authorList>
    </citation>
    <scope>NUCLEOTIDE SEQUENCE [LARGE SCALE GENOMIC DNA]</scope>
    <source>
        <strain>306</strain>
    </source>
</reference>
<gene>
    <name evidence="1" type="primary">proA</name>
    <name type="ordered locus">XAC2342</name>
</gene>